<evidence type="ECO:0000255" key="1">
    <source>
        <dbReference type="HAMAP-Rule" id="MF_00093"/>
    </source>
</evidence>
<protein>
    <recommendedName>
        <fullName evidence="1">Peptide chain release factor 1</fullName>
        <shortName evidence="1">RF-1</shortName>
    </recommendedName>
</protein>
<feature type="chain" id="PRO_0000263391" description="Peptide chain release factor 1">
    <location>
        <begin position="1"/>
        <end position="361"/>
    </location>
</feature>
<feature type="modified residue" description="N5-methylglutamine" evidence="1">
    <location>
        <position position="235"/>
    </location>
</feature>
<dbReference type="EMBL" id="CP000050">
    <property type="protein sequence ID" value="AAY50407.1"/>
    <property type="molecule type" value="Genomic_DNA"/>
</dbReference>
<dbReference type="RefSeq" id="WP_011269978.1">
    <property type="nucleotide sequence ID" value="NC_007086.1"/>
</dbReference>
<dbReference type="SMR" id="Q4URB6"/>
<dbReference type="KEGG" id="xcb:XC_3363"/>
<dbReference type="HOGENOM" id="CLU_036856_0_1_6"/>
<dbReference type="Proteomes" id="UP000000420">
    <property type="component" value="Chromosome"/>
</dbReference>
<dbReference type="GO" id="GO:0005737">
    <property type="term" value="C:cytoplasm"/>
    <property type="evidence" value="ECO:0007669"/>
    <property type="project" value="UniProtKB-SubCell"/>
</dbReference>
<dbReference type="GO" id="GO:0016149">
    <property type="term" value="F:translation release factor activity, codon specific"/>
    <property type="evidence" value="ECO:0007669"/>
    <property type="project" value="UniProtKB-UniRule"/>
</dbReference>
<dbReference type="FunFam" id="3.30.160.20:FF:000004">
    <property type="entry name" value="Peptide chain release factor 1"/>
    <property type="match status" value="1"/>
</dbReference>
<dbReference type="FunFam" id="3.30.70.1660:FF:000002">
    <property type="entry name" value="Peptide chain release factor 1"/>
    <property type="match status" value="1"/>
</dbReference>
<dbReference type="FunFam" id="3.30.70.1660:FF:000004">
    <property type="entry name" value="Peptide chain release factor 1"/>
    <property type="match status" value="1"/>
</dbReference>
<dbReference type="Gene3D" id="3.30.160.20">
    <property type="match status" value="1"/>
</dbReference>
<dbReference type="Gene3D" id="3.30.70.1660">
    <property type="match status" value="1"/>
</dbReference>
<dbReference type="Gene3D" id="6.10.140.1950">
    <property type="match status" value="1"/>
</dbReference>
<dbReference type="HAMAP" id="MF_00093">
    <property type="entry name" value="Rel_fac_1"/>
    <property type="match status" value="1"/>
</dbReference>
<dbReference type="InterPro" id="IPR005139">
    <property type="entry name" value="PCRF"/>
</dbReference>
<dbReference type="InterPro" id="IPR000352">
    <property type="entry name" value="Pep_chain_release_fac_I"/>
</dbReference>
<dbReference type="InterPro" id="IPR045853">
    <property type="entry name" value="Pep_chain_release_fac_I_sf"/>
</dbReference>
<dbReference type="InterPro" id="IPR050057">
    <property type="entry name" value="Prokaryotic/Mito_RF"/>
</dbReference>
<dbReference type="InterPro" id="IPR004373">
    <property type="entry name" value="RF-1"/>
</dbReference>
<dbReference type="NCBIfam" id="TIGR00019">
    <property type="entry name" value="prfA"/>
    <property type="match status" value="1"/>
</dbReference>
<dbReference type="NCBIfam" id="NF001859">
    <property type="entry name" value="PRK00591.1"/>
    <property type="match status" value="1"/>
</dbReference>
<dbReference type="PANTHER" id="PTHR43804">
    <property type="entry name" value="LD18447P"/>
    <property type="match status" value="1"/>
</dbReference>
<dbReference type="PANTHER" id="PTHR43804:SF7">
    <property type="entry name" value="LD18447P"/>
    <property type="match status" value="1"/>
</dbReference>
<dbReference type="Pfam" id="PF03462">
    <property type="entry name" value="PCRF"/>
    <property type="match status" value="1"/>
</dbReference>
<dbReference type="Pfam" id="PF00472">
    <property type="entry name" value="RF-1"/>
    <property type="match status" value="1"/>
</dbReference>
<dbReference type="SMART" id="SM00937">
    <property type="entry name" value="PCRF"/>
    <property type="match status" value="1"/>
</dbReference>
<dbReference type="SUPFAM" id="SSF75620">
    <property type="entry name" value="Release factor"/>
    <property type="match status" value="1"/>
</dbReference>
<dbReference type="PROSITE" id="PS00745">
    <property type="entry name" value="RF_PROK_I"/>
    <property type="match status" value="1"/>
</dbReference>
<reference key="1">
    <citation type="journal article" date="2005" name="Genome Res.">
        <title>Comparative and functional genomic analyses of the pathogenicity of phytopathogen Xanthomonas campestris pv. campestris.</title>
        <authorList>
            <person name="Qian W."/>
            <person name="Jia Y."/>
            <person name="Ren S.-X."/>
            <person name="He Y.-Q."/>
            <person name="Feng J.-X."/>
            <person name="Lu L.-F."/>
            <person name="Sun Q."/>
            <person name="Ying G."/>
            <person name="Tang D.-J."/>
            <person name="Tang H."/>
            <person name="Wu W."/>
            <person name="Hao P."/>
            <person name="Wang L."/>
            <person name="Jiang B.-L."/>
            <person name="Zeng S."/>
            <person name="Gu W.-Y."/>
            <person name="Lu G."/>
            <person name="Rong L."/>
            <person name="Tian Y."/>
            <person name="Yao Z."/>
            <person name="Fu G."/>
            <person name="Chen B."/>
            <person name="Fang R."/>
            <person name="Qiang B."/>
            <person name="Chen Z."/>
            <person name="Zhao G.-P."/>
            <person name="Tang J.-L."/>
            <person name="He C."/>
        </authorList>
    </citation>
    <scope>NUCLEOTIDE SEQUENCE [LARGE SCALE GENOMIC DNA]</scope>
    <source>
        <strain>8004</strain>
    </source>
</reference>
<comment type="function">
    <text evidence="1">Peptide chain release factor 1 directs the termination of translation in response to the peptide chain termination codons UAG and UAA.</text>
</comment>
<comment type="subcellular location">
    <subcellularLocation>
        <location evidence="1">Cytoplasm</location>
    </subcellularLocation>
</comment>
<comment type="PTM">
    <text evidence="1">Methylated by PrmC. Methylation increases the termination efficiency of RF1.</text>
</comment>
<comment type="similarity">
    <text evidence="1">Belongs to the prokaryotic/mitochondrial release factor family.</text>
</comment>
<proteinExistence type="inferred from homology"/>
<accession>Q4URB6</accession>
<name>RF1_XANC8</name>
<keyword id="KW-0963">Cytoplasm</keyword>
<keyword id="KW-0488">Methylation</keyword>
<keyword id="KW-0648">Protein biosynthesis</keyword>
<organism>
    <name type="scientific">Xanthomonas campestris pv. campestris (strain 8004)</name>
    <dbReference type="NCBI Taxonomy" id="314565"/>
    <lineage>
        <taxon>Bacteria</taxon>
        <taxon>Pseudomonadati</taxon>
        <taxon>Pseudomonadota</taxon>
        <taxon>Gammaproteobacteria</taxon>
        <taxon>Lysobacterales</taxon>
        <taxon>Lysobacteraceae</taxon>
        <taxon>Xanthomonas</taxon>
    </lineage>
</organism>
<sequence length="361" mass="40008">MTPTLRRKLEALAERREELQHLLSDPEVVSNNDKFRSLSRELSQLEPVALAMQEEARAKADLSAAEAMRNDPEMRELAEEEILAAQARLDELDAQLALLLVPRDPRDEGNLFLEVRAGTGGDEAAIFAGDLFRMYARYAERQGWKVEIESDSPGEHGGYKEVVARVVGRGAYSRLKFESGTHRVQRVPATESQGRIHTSAATVAIIPEADDVEEIVINPADLKVDTFRSSGAGGQHVNKTESAIRITHVPSGVVVECQTERSQHANRDKAMKRLKAQLVEAERSKAAAAKAQTRKLQVGSGDRSQRIRTYSFPQGRITDHRVEGLTLYDLPNIIEGDLDALIARLLHEHQADELARLSEGT</sequence>
<gene>
    <name evidence="1" type="primary">prfA</name>
    <name type="ordered locus">XC_3363</name>
</gene>